<protein>
    <recommendedName>
        <fullName evidence="7">Contryphan-Fib</fullName>
    </recommendedName>
</protein>
<keyword id="KW-0027">Amidation</keyword>
<keyword id="KW-0903">Direct protein sequencing</keyword>
<keyword id="KW-1015">Disulfide bond</keyword>
<keyword id="KW-0379">Hydroxylation</keyword>
<keyword id="KW-0872">Ion channel impairing toxin</keyword>
<keyword id="KW-0528">Neurotoxin</keyword>
<keyword id="KW-0964">Secreted</keyword>
<keyword id="KW-0800">Toxin</keyword>
<accession>P0DP13</accession>
<dbReference type="GO" id="GO:0005576">
    <property type="term" value="C:extracellular region"/>
    <property type="evidence" value="ECO:0007669"/>
    <property type="project" value="UniProtKB-SubCell"/>
</dbReference>
<dbReference type="GO" id="GO:0099106">
    <property type="term" value="F:ion channel regulator activity"/>
    <property type="evidence" value="ECO:0007669"/>
    <property type="project" value="UniProtKB-KW"/>
</dbReference>
<dbReference type="GO" id="GO:0090729">
    <property type="term" value="F:toxin activity"/>
    <property type="evidence" value="ECO:0007669"/>
    <property type="project" value="UniProtKB-KW"/>
</dbReference>
<dbReference type="InterPro" id="IPR011062">
    <property type="entry name" value="Contryphan_CS"/>
</dbReference>
<dbReference type="PROSITE" id="PS60027">
    <property type="entry name" value="CONTRYPHAN"/>
    <property type="match status" value="1"/>
</dbReference>
<sequence length="8" mass="979">GCPWMPWC</sequence>
<feature type="peptide" id="PRO_0000439624" description="Contryphan-Fib" evidence="6">
    <location>
        <begin position="1"/>
        <end position="8"/>
    </location>
</feature>
<feature type="modified residue" description="4-hydroxyproline" evidence="6">
    <location>
        <position position="3"/>
    </location>
</feature>
<feature type="modified residue" description="Cysteine amide" evidence="6">
    <location>
        <position position="8"/>
    </location>
</feature>
<feature type="disulfide bond" evidence="6">
    <location>
        <begin position="2"/>
        <end position="8"/>
    </location>
</feature>
<comment type="function">
    <text evidence="1 2 4 5">Its target is unknown, but this toxin may modulate voltage-activated calcium channels (Cav) or calcium-dependent potassium channels (KCa).</text>
</comment>
<comment type="subcellular location">
    <subcellularLocation>
        <location evidence="6">Secreted</location>
    </subcellularLocation>
</comment>
<comment type="tissue specificity">
    <text evidence="9">Expressed by the venom duct.</text>
</comment>
<comment type="domain">
    <text evidence="8">The cysteine framework is C-C.</text>
</comment>
<comment type="mass spectrometry" mass="991.5" method="Unknown" evidence="6"/>
<comment type="miscellaneous">
    <text evidence="3">Exists in two forms, due to cis-trans isomerization at 2-Cys-hydroxyPro-3. The cis conformation is the major form.</text>
</comment>
<comment type="similarity">
    <text evidence="8">Belongs to the O2 superfamily. Contryphan family.</text>
</comment>
<reference key="1">
    <citation type="journal article" date="2015" name="J. Pept. Sci.">
        <title>Novel M-Superfamily and T-Superfamily conotoxins and contryphans from the vermivorous snail Conus figulinus.</title>
        <authorList>
            <person name="Rajesh R.P."/>
        </authorList>
    </citation>
    <scope>PROTEIN SEQUENCE</scope>
    <scope>IDENTIFICATION BY MASS SPECTROMETRY</scope>
    <scope>MASS SPECTROMETRY</scope>
    <scope>HYDROXYLATION AT PRO-3</scope>
    <scope>AMIDATION AT CYS-8</scope>
    <scope>SUBCELLULAR LOCATION</scope>
    <source>
        <tissue>Venom</tissue>
    </source>
</reference>
<proteinExistence type="evidence at protein level"/>
<name>COWB_CONFI</name>
<organism>
    <name type="scientific">Conus figulinus</name>
    <name type="common">Fig cone</name>
    <dbReference type="NCBI Taxonomy" id="101301"/>
    <lineage>
        <taxon>Eukaryota</taxon>
        <taxon>Metazoa</taxon>
        <taxon>Spiralia</taxon>
        <taxon>Lophotrochozoa</taxon>
        <taxon>Mollusca</taxon>
        <taxon>Gastropoda</taxon>
        <taxon>Caenogastropoda</taxon>
        <taxon>Neogastropoda</taxon>
        <taxon>Conoidea</taxon>
        <taxon>Conidae</taxon>
        <taxon>Conus</taxon>
        <taxon>Dendroconus</taxon>
    </lineage>
</organism>
<evidence type="ECO:0000250" key="1">
    <source>
        <dbReference type="UniProtKB" id="P0C248"/>
    </source>
</evidence>
<evidence type="ECO:0000250" key="2">
    <source>
        <dbReference type="UniProtKB" id="P0C250"/>
    </source>
</evidence>
<evidence type="ECO:0000250" key="3">
    <source>
        <dbReference type="UniProtKB" id="P58787"/>
    </source>
</evidence>
<evidence type="ECO:0000250" key="4">
    <source>
        <dbReference type="UniProtKB" id="P62903"/>
    </source>
</evidence>
<evidence type="ECO:0000250" key="5">
    <source>
        <dbReference type="UniProtKB" id="P83047"/>
    </source>
</evidence>
<evidence type="ECO:0000269" key="6">
    <source>
    </source>
</evidence>
<evidence type="ECO:0000303" key="7">
    <source>
    </source>
</evidence>
<evidence type="ECO:0000305" key="8"/>
<evidence type="ECO:0000305" key="9">
    <source>
    </source>
</evidence>